<comment type="function">
    <text evidence="1">The RuvA-RuvB-RuvC complex processes Holliday junction (HJ) DNA during genetic recombination and DNA repair, while the RuvA-RuvB complex plays an important role in the rescue of blocked DNA replication forks via replication fork reversal (RFR). RuvA specifically binds to HJ cruciform DNA, conferring on it an open structure. The RuvB hexamer acts as an ATP-dependent pump, pulling dsDNA into and through the RuvAB complex. HJ branch migration allows RuvC to scan DNA until it finds its consensus sequence, where it cleaves and resolves the cruciform DNA.</text>
</comment>
<comment type="subunit">
    <text evidence="1">Homotetramer. Forms an RuvA(8)-RuvB(12)-Holliday junction (HJ) complex. HJ DNA is sandwiched between 2 RuvA tetramers; dsDNA enters through RuvA and exits via RuvB. An RuvB hexamer assembles on each DNA strand where it exits the tetramer. Each RuvB hexamer is contacted by two RuvA subunits (via domain III) on 2 adjacent RuvB subunits; this complex drives branch migration. In the full resolvosome a probable DNA-RuvA(4)-RuvB(12)-RuvC(2) complex forms which resolves the HJ.</text>
</comment>
<comment type="subcellular location">
    <subcellularLocation>
        <location evidence="1">Cytoplasm</location>
    </subcellularLocation>
</comment>
<comment type="domain">
    <text evidence="1">Has three domains with a flexible linker between the domains II and III and assumes an 'L' shape. Domain III is highly mobile and contacts RuvB.</text>
</comment>
<comment type="similarity">
    <text evidence="1">Belongs to the RuvA family.</text>
</comment>
<name>RUVA_ECO81</name>
<feature type="chain" id="PRO_1000195146" description="Holliday junction branch migration complex subunit RuvA">
    <location>
        <begin position="1"/>
        <end position="203"/>
    </location>
</feature>
<feature type="region of interest" description="Domain I" evidence="1">
    <location>
        <begin position="1"/>
        <end position="64"/>
    </location>
</feature>
<feature type="region of interest" description="Domain II" evidence="1">
    <location>
        <begin position="65"/>
        <end position="142"/>
    </location>
</feature>
<feature type="region of interest" description="Flexible linker" evidence="1">
    <location>
        <begin position="143"/>
        <end position="154"/>
    </location>
</feature>
<feature type="region of interest" description="Domain III" evidence="1">
    <location>
        <begin position="155"/>
        <end position="203"/>
    </location>
</feature>
<sequence>MIGRLRGIIIEKQPPLVLIEVGGVGYEVHMPMTCFYELPEAGQEAIVFTHFVVREDAQLLYGFNNKQERTLFKELIKTNGVGPKLALAILSGMSAQQFVNAVEREEVGALVKLPGIGKKTAERLIVEMKDRFKGLHGDLFTPAADLVLTSPASPATDDAEQEAVAALVALGYKPQEASRMVSKIARPDASSETLIREALRAAL</sequence>
<keyword id="KW-0963">Cytoplasm</keyword>
<keyword id="KW-0227">DNA damage</keyword>
<keyword id="KW-0233">DNA recombination</keyword>
<keyword id="KW-0234">DNA repair</keyword>
<keyword id="KW-0238">DNA-binding</keyword>
<keyword id="KW-0742">SOS response</keyword>
<gene>
    <name evidence="1" type="primary">ruvA</name>
    <name type="ordered locus">ECED1_2066</name>
</gene>
<dbReference type="EMBL" id="CU928162">
    <property type="protein sequence ID" value="CAR08163.1"/>
    <property type="molecule type" value="Genomic_DNA"/>
</dbReference>
<dbReference type="RefSeq" id="WP_000580323.1">
    <property type="nucleotide sequence ID" value="NC_011745.1"/>
</dbReference>
<dbReference type="SMR" id="B7MVP7"/>
<dbReference type="GeneID" id="75057740"/>
<dbReference type="KEGG" id="ecq:ECED1_2066"/>
<dbReference type="HOGENOM" id="CLU_087936_0_0_6"/>
<dbReference type="Proteomes" id="UP000000748">
    <property type="component" value="Chromosome"/>
</dbReference>
<dbReference type="GO" id="GO:0005737">
    <property type="term" value="C:cytoplasm"/>
    <property type="evidence" value="ECO:0007669"/>
    <property type="project" value="UniProtKB-SubCell"/>
</dbReference>
<dbReference type="GO" id="GO:0009379">
    <property type="term" value="C:Holliday junction helicase complex"/>
    <property type="evidence" value="ECO:0007669"/>
    <property type="project" value="InterPro"/>
</dbReference>
<dbReference type="GO" id="GO:0048476">
    <property type="term" value="C:Holliday junction resolvase complex"/>
    <property type="evidence" value="ECO:0007669"/>
    <property type="project" value="UniProtKB-UniRule"/>
</dbReference>
<dbReference type="GO" id="GO:0005524">
    <property type="term" value="F:ATP binding"/>
    <property type="evidence" value="ECO:0007669"/>
    <property type="project" value="InterPro"/>
</dbReference>
<dbReference type="GO" id="GO:0000400">
    <property type="term" value="F:four-way junction DNA binding"/>
    <property type="evidence" value="ECO:0007669"/>
    <property type="project" value="UniProtKB-UniRule"/>
</dbReference>
<dbReference type="GO" id="GO:0009378">
    <property type="term" value="F:four-way junction helicase activity"/>
    <property type="evidence" value="ECO:0007669"/>
    <property type="project" value="InterPro"/>
</dbReference>
<dbReference type="GO" id="GO:0006310">
    <property type="term" value="P:DNA recombination"/>
    <property type="evidence" value="ECO:0007669"/>
    <property type="project" value="UniProtKB-UniRule"/>
</dbReference>
<dbReference type="GO" id="GO:0006281">
    <property type="term" value="P:DNA repair"/>
    <property type="evidence" value="ECO:0007669"/>
    <property type="project" value="UniProtKB-UniRule"/>
</dbReference>
<dbReference type="GO" id="GO:0009432">
    <property type="term" value="P:SOS response"/>
    <property type="evidence" value="ECO:0007669"/>
    <property type="project" value="UniProtKB-UniRule"/>
</dbReference>
<dbReference type="CDD" id="cd14332">
    <property type="entry name" value="UBA_RuvA_C"/>
    <property type="match status" value="1"/>
</dbReference>
<dbReference type="FunFam" id="1.10.150.20:FF:000012">
    <property type="entry name" value="Holliday junction ATP-dependent DNA helicase RuvA"/>
    <property type="match status" value="1"/>
</dbReference>
<dbReference type="FunFam" id="1.10.8.10:FF:000008">
    <property type="entry name" value="Holliday junction ATP-dependent DNA helicase RuvA"/>
    <property type="match status" value="1"/>
</dbReference>
<dbReference type="FunFam" id="2.40.50.140:FF:000083">
    <property type="entry name" value="Holliday junction ATP-dependent DNA helicase RuvA"/>
    <property type="match status" value="1"/>
</dbReference>
<dbReference type="Gene3D" id="1.10.150.20">
    <property type="entry name" value="5' to 3' exonuclease, C-terminal subdomain"/>
    <property type="match status" value="1"/>
</dbReference>
<dbReference type="Gene3D" id="1.10.8.10">
    <property type="entry name" value="DNA helicase RuvA subunit, C-terminal domain"/>
    <property type="match status" value="1"/>
</dbReference>
<dbReference type="Gene3D" id="2.40.50.140">
    <property type="entry name" value="Nucleic acid-binding proteins"/>
    <property type="match status" value="1"/>
</dbReference>
<dbReference type="HAMAP" id="MF_00031">
    <property type="entry name" value="DNA_HJ_migration_RuvA"/>
    <property type="match status" value="1"/>
</dbReference>
<dbReference type="InterPro" id="IPR013849">
    <property type="entry name" value="DNA_helicase_Holl-junc_RuvA_I"/>
</dbReference>
<dbReference type="InterPro" id="IPR003583">
    <property type="entry name" value="Hlx-hairpin-Hlx_DNA-bd_motif"/>
</dbReference>
<dbReference type="InterPro" id="IPR012340">
    <property type="entry name" value="NA-bd_OB-fold"/>
</dbReference>
<dbReference type="InterPro" id="IPR000085">
    <property type="entry name" value="RuvA"/>
</dbReference>
<dbReference type="InterPro" id="IPR010994">
    <property type="entry name" value="RuvA_2-like"/>
</dbReference>
<dbReference type="InterPro" id="IPR011114">
    <property type="entry name" value="RuvA_C"/>
</dbReference>
<dbReference type="InterPro" id="IPR036267">
    <property type="entry name" value="RuvA_C_sf"/>
</dbReference>
<dbReference type="NCBIfam" id="TIGR00084">
    <property type="entry name" value="ruvA"/>
    <property type="match status" value="1"/>
</dbReference>
<dbReference type="Pfam" id="PF14520">
    <property type="entry name" value="HHH_5"/>
    <property type="match status" value="1"/>
</dbReference>
<dbReference type="Pfam" id="PF07499">
    <property type="entry name" value="RuvA_C"/>
    <property type="match status" value="1"/>
</dbReference>
<dbReference type="Pfam" id="PF01330">
    <property type="entry name" value="RuvA_N"/>
    <property type="match status" value="1"/>
</dbReference>
<dbReference type="SMART" id="SM00278">
    <property type="entry name" value="HhH1"/>
    <property type="match status" value="2"/>
</dbReference>
<dbReference type="SUPFAM" id="SSF46929">
    <property type="entry name" value="DNA helicase RuvA subunit, C-terminal domain"/>
    <property type="match status" value="1"/>
</dbReference>
<dbReference type="SUPFAM" id="SSF50249">
    <property type="entry name" value="Nucleic acid-binding proteins"/>
    <property type="match status" value="1"/>
</dbReference>
<dbReference type="SUPFAM" id="SSF47781">
    <property type="entry name" value="RuvA domain 2-like"/>
    <property type="match status" value="1"/>
</dbReference>
<proteinExistence type="inferred from homology"/>
<accession>B7MVP7</accession>
<protein>
    <recommendedName>
        <fullName evidence="1">Holliday junction branch migration complex subunit RuvA</fullName>
    </recommendedName>
</protein>
<organism>
    <name type="scientific">Escherichia coli O81 (strain ED1a)</name>
    <dbReference type="NCBI Taxonomy" id="585397"/>
    <lineage>
        <taxon>Bacteria</taxon>
        <taxon>Pseudomonadati</taxon>
        <taxon>Pseudomonadota</taxon>
        <taxon>Gammaproteobacteria</taxon>
        <taxon>Enterobacterales</taxon>
        <taxon>Enterobacteriaceae</taxon>
        <taxon>Escherichia</taxon>
    </lineage>
</organism>
<evidence type="ECO:0000255" key="1">
    <source>
        <dbReference type="HAMAP-Rule" id="MF_00031"/>
    </source>
</evidence>
<reference key="1">
    <citation type="journal article" date="2009" name="PLoS Genet.">
        <title>Organised genome dynamics in the Escherichia coli species results in highly diverse adaptive paths.</title>
        <authorList>
            <person name="Touchon M."/>
            <person name="Hoede C."/>
            <person name="Tenaillon O."/>
            <person name="Barbe V."/>
            <person name="Baeriswyl S."/>
            <person name="Bidet P."/>
            <person name="Bingen E."/>
            <person name="Bonacorsi S."/>
            <person name="Bouchier C."/>
            <person name="Bouvet O."/>
            <person name="Calteau A."/>
            <person name="Chiapello H."/>
            <person name="Clermont O."/>
            <person name="Cruveiller S."/>
            <person name="Danchin A."/>
            <person name="Diard M."/>
            <person name="Dossat C."/>
            <person name="Karoui M.E."/>
            <person name="Frapy E."/>
            <person name="Garry L."/>
            <person name="Ghigo J.M."/>
            <person name="Gilles A.M."/>
            <person name="Johnson J."/>
            <person name="Le Bouguenec C."/>
            <person name="Lescat M."/>
            <person name="Mangenot S."/>
            <person name="Martinez-Jehanne V."/>
            <person name="Matic I."/>
            <person name="Nassif X."/>
            <person name="Oztas S."/>
            <person name="Petit M.A."/>
            <person name="Pichon C."/>
            <person name="Rouy Z."/>
            <person name="Ruf C.S."/>
            <person name="Schneider D."/>
            <person name="Tourret J."/>
            <person name="Vacherie B."/>
            <person name="Vallenet D."/>
            <person name="Medigue C."/>
            <person name="Rocha E.P.C."/>
            <person name="Denamur E."/>
        </authorList>
    </citation>
    <scope>NUCLEOTIDE SEQUENCE [LARGE SCALE GENOMIC DNA]</scope>
    <source>
        <strain>ED1a</strain>
    </source>
</reference>